<comment type="function">
    <text evidence="1">One of several proteins that assist in the late maturation steps of the functional core of the 30S ribosomal subunit. Associates with free 30S ribosomal subunits (but not with 30S subunits that are part of 70S ribosomes or polysomes). Required for efficient processing of 16S rRNA. May interact with the 5'-terminal helix region of 16S rRNA.</text>
</comment>
<comment type="subunit">
    <text evidence="1">Monomer. Binds 30S ribosomal subunits, but not 50S ribosomal subunits or 70S ribosomes.</text>
</comment>
<comment type="subcellular location">
    <subcellularLocation>
        <location evidence="1">Cytoplasm</location>
    </subcellularLocation>
</comment>
<comment type="similarity">
    <text evidence="1">Belongs to the RbfA family.</text>
</comment>
<proteinExistence type="inferred from homology"/>
<dbReference type="EMBL" id="CP000747">
    <property type="protein sequence ID" value="ACG79844.1"/>
    <property type="molecule type" value="Genomic_DNA"/>
</dbReference>
<dbReference type="RefSeq" id="WP_012523982.1">
    <property type="nucleotide sequence ID" value="NC_011144.1"/>
</dbReference>
<dbReference type="SMR" id="B4RC51"/>
<dbReference type="STRING" id="450851.PHZ_c3435"/>
<dbReference type="KEGG" id="pzu:PHZ_c3435"/>
<dbReference type="eggNOG" id="COG0858">
    <property type="taxonomic scope" value="Bacteria"/>
</dbReference>
<dbReference type="HOGENOM" id="CLU_089475_1_0_5"/>
<dbReference type="OrthoDB" id="9805051at2"/>
<dbReference type="Proteomes" id="UP000001868">
    <property type="component" value="Chromosome"/>
</dbReference>
<dbReference type="GO" id="GO:0005829">
    <property type="term" value="C:cytosol"/>
    <property type="evidence" value="ECO:0007669"/>
    <property type="project" value="TreeGrafter"/>
</dbReference>
<dbReference type="GO" id="GO:0043024">
    <property type="term" value="F:ribosomal small subunit binding"/>
    <property type="evidence" value="ECO:0007669"/>
    <property type="project" value="TreeGrafter"/>
</dbReference>
<dbReference type="GO" id="GO:0030490">
    <property type="term" value="P:maturation of SSU-rRNA"/>
    <property type="evidence" value="ECO:0007669"/>
    <property type="project" value="UniProtKB-UniRule"/>
</dbReference>
<dbReference type="Gene3D" id="3.30.300.20">
    <property type="match status" value="1"/>
</dbReference>
<dbReference type="HAMAP" id="MF_00003">
    <property type="entry name" value="RbfA"/>
    <property type="match status" value="1"/>
</dbReference>
<dbReference type="InterPro" id="IPR015946">
    <property type="entry name" value="KH_dom-like_a/b"/>
</dbReference>
<dbReference type="InterPro" id="IPR000238">
    <property type="entry name" value="RbfA"/>
</dbReference>
<dbReference type="InterPro" id="IPR023799">
    <property type="entry name" value="RbfA_dom_sf"/>
</dbReference>
<dbReference type="InterPro" id="IPR020053">
    <property type="entry name" value="Ribosome-bd_factorA_CS"/>
</dbReference>
<dbReference type="NCBIfam" id="NF001802">
    <property type="entry name" value="PRK00521.2-5"/>
    <property type="match status" value="1"/>
</dbReference>
<dbReference type="NCBIfam" id="TIGR00082">
    <property type="entry name" value="rbfA"/>
    <property type="match status" value="1"/>
</dbReference>
<dbReference type="PANTHER" id="PTHR33515">
    <property type="entry name" value="RIBOSOME-BINDING FACTOR A, CHLOROPLASTIC-RELATED"/>
    <property type="match status" value="1"/>
</dbReference>
<dbReference type="PANTHER" id="PTHR33515:SF1">
    <property type="entry name" value="RIBOSOME-BINDING FACTOR A, CHLOROPLASTIC-RELATED"/>
    <property type="match status" value="1"/>
</dbReference>
<dbReference type="Pfam" id="PF02033">
    <property type="entry name" value="RBFA"/>
    <property type="match status" value="1"/>
</dbReference>
<dbReference type="SUPFAM" id="SSF89919">
    <property type="entry name" value="Ribosome-binding factor A, RbfA"/>
    <property type="match status" value="1"/>
</dbReference>
<dbReference type="PROSITE" id="PS01319">
    <property type="entry name" value="RBFA"/>
    <property type="match status" value="1"/>
</dbReference>
<evidence type="ECO:0000255" key="1">
    <source>
        <dbReference type="HAMAP-Rule" id="MF_00003"/>
    </source>
</evidence>
<evidence type="ECO:0000256" key="2">
    <source>
        <dbReference type="SAM" id="MobiDB-lite"/>
    </source>
</evidence>
<keyword id="KW-0963">Cytoplasm</keyword>
<keyword id="KW-1185">Reference proteome</keyword>
<keyword id="KW-0690">Ribosome biogenesis</keyword>
<organism>
    <name type="scientific">Phenylobacterium zucineum (strain HLK1)</name>
    <dbReference type="NCBI Taxonomy" id="450851"/>
    <lineage>
        <taxon>Bacteria</taxon>
        <taxon>Pseudomonadati</taxon>
        <taxon>Pseudomonadota</taxon>
        <taxon>Alphaproteobacteria</taxon>
        <taxon>Caulobacterales</taxon>
        <taxon>Caulobacteraceae</taxon>
        <taxon>Phenylobacterium</taxon>
    </lineage>
</organism>
<gene>
    <name evidence="1" type="primary">rbfA</name>
    <name type="ordered locus">PHZ_c3435</name>
</gene>
<protein>
    <recommendedName>
        <fullName evidence="1">Ribosome-binding factor A</fullName>
    </recommendedName>
</protein>
<name>RBFA_PHEZH</name>
<sequence length="145" mass="16485">MKRPSSHGRRPPQGPSQRQLRAGELVRHALVEIFREEEINDPVLAGVSVTVTEVRVSPDLRHATVFVEPLGGEHADEVVQALNRHARFLRGHLGRAIELRFTPELKFLHDESFNEAARMAKLFDDPKVRQDLTPQPPSDSWKDED</sequence>
<feature type="chain" id="PRO_1000088913" description="Ribosome-binding factor A">
    <location>
        <begin position="1"/>
        <end position="145"/>
    </location>
</feature>
<feature type="region of interest" description="Disordered" evidence="2">
    <location>
        <begin position="1"/>
        <end position="21"/>
    </location>
</feature>
<feature type="region of interest" description="Disordered" evidence="2">
    <location>
        <begin position="124"/>
        <end position="145"/>
    </location>
</feature>
<feature type="compositionally biased region" description="Basic residues" evidence="2">
    <location>
        <begin position="1"/>
        <end position="10"/>
    </location>
</feature>
<reference key="1">
    <citation type="journal article" date="2008" name="BMC Genomics">
        <title>Complete genome of Phenylobacterium zucineum - a novel facultative intracellular bacterium isolated from human erythroleukemia cell line K562.</title>
        <authorList>
            <person name="Luo Y."/>
            <person name="Xu X."/>
            <person name="Ding Z."/>
            <person name="Liu Z."/>
            <person name="Zhang B."/>
            <person name="Yan Z."/>
            <person name="Sun J."/>
            <person name="Hu S."/>
            <person name="Hu X."/>
        </authorList>
    </citation>
    <scope>NUCLEOTIDE SEQUENCE [LARGE SCALE GENOMIC DNA]</scope>
    <source>
        <strain>HLK1</strain>
    </source>
</reference>
<accession>B4RC51</accession>